<evidence type="ECO:0000250" key="1"/>
<evidence type="ECO:0000250" key="2">
    <source>
        <dbReference type="UniProtKB" id="Q13685"/>
    </source>
</evidence>
<evidence type="ECO:0000256" key="3">
    <source>
        <dbReference type="SAM" id="MobiDB-lite"/>
    </source>
</evidence>
<keyword id="KW-0037">Angiogenesis</keyword>
<keyword id="KW-1003">Cell membrane</keyword>
<keyword id="KW-0963">Cytoplasm</keyword>
<keyword id="KW-0217">Developmental protein</keyword>
<keyword id="KW-0221">Differentiation</keyword>
<keyword id="KW-0472">Membrane</keyword>
<keyword id="KW-0597">Phosphoprotein</keyword>
<keyword id="KW-1185">Reference proteome</keyword>
<keyword id="KW-0677">Repeat</keyword>
<keyword id="KW-0853">WD repeat</keyword>
<reference key="1">
    <citation type="journal article" date="2003" name="Genomics">
        <title>Linkage mapping of the primary disease locus for collie eye anomaly.</title>
        <authorList>
            <person name="Lowe J.K."/>
            <person name="Kukekova A.V."/>
            <person name="Kirkness E.F."/>
            <person name="Langlois M.C."/>
            <person name="Aguirre G.D."/>
            <person name="Acland G.M."/>
            <person name="Ostrander E.A."/>
        </authorList>
    </citation>
    <scope>NUCLEOTIDE SEQUENCE [GENOMIC DNA]</scope>
</reference>
<name>AAMP_CANLF</name>
<accession>Q7YR70</accession>
<organism>
    <name type="scientific">Canis lupus familiaris</name>
    <name type="common">Dog</name>
    <name type="synonym">Canis familiaris</name>
    <dbReference type="NCBI Taxonomy" id="9615"/>
    <lineage>
        <taxon>Eukaryota</taxon>
        <taxon>Metazoa</taxon>
        <taxon>Chordata</taxon>
        <taxon>Craniata</taxon>
        <taxon>Vertebrata</taxon>
        <taxon>Euteleostomi</taxon>
        <taxon>Mammalia</taxon>
        <taxon>Eutheria</taxon>
        <taxon>Laurasiatheria</taxon>
        <taxon>Carnivora</taxon>
        <taxon>Caniformia</taxon>
        <taxon>Canidae</taxon>
        <taxon>Canis</taxon>
    </lineage>
</organism>
<proteinExistence type="inferred from homology"/>
<feature type="chain" id="PRO_0000050831" description="Angio-associated migratory cell protein">
    <location>
        <begin position="1"/>
        <end position="435"/>
    </location>
</feature>
<feature type="repeat" description="WD 1">
    <location>
        <begin position="90"/>
        <end position="130"/>
    </location>
</feature>
<feature type="repeat" description="WD 2">
    <location>
        <begin position="133"/>
        <end position="172"/>
    </location>
</feature>
<feature type="repeat" description="WD 3">
    <location>
        <begin position="174"/>
        <end position="213"/>
    </location>
</feature>
<feature type="repeat" description="WD 4">
    <location>
        <begin position="215"/>
        <end position="255"/>
    </location>
</feature>
<feature type="repeat" description="WD 5">
    <location>
        <begin position="259"/>
        <end position="300"/>
    </location>
</feature>
<feature type="repeat" description="WD 6">
    <location>
        <begin position="316"/>
        <end position="355"/>
    </location>
</feature>
<feature type="repeat" description="WD 7">
    <location>
        <begin position="357"/>
        <end position="396"/>
    </location>
</feature>
<feature type="repeat" description="WD 8">
    <location>
        <begin position="399"/>
        <end position="434"/>
    </location>
</feature>
<feature type="region of interest" description="Disordered" evidence="3">
    <location>
        <begin position="1"/>
        <end position="65"/>
    </location>
</feature>
<feature type="compositionally biased region" description="Acidic residues" evidence="3">
    <location>
        <begin position="39"/>
        <end position="63"/>
    </location>
</feature>
<feature type="modified residue" description="Phosphoserine" evidence="2">
    <location>
        <position position="20"/>
    </location>
</feature>
<dbReference type="EMBL" id="AY197355">
    <property type="protein sequence ID" value="AAO38199.1"/>
    <property type="molecule type" value="Genomic_DNA"/>
</dbReference>
<dbReference type="RefSeq" id="NP_001013872.1">
    <property type="nucleotide sequence ID" value="NM_001013850.1"/>
</dbReference>
<dbReference type="SMR" id="Q7YR70"/>
<dbReference type="FunCoup" id="Q7YR70">
    <property type="interactions" value="2453"/>
</dbReference>
<dbReference type="STRING" id="9615.ENSCAFP00000066802"/>
<dbReference type="PaxDb" id="9612-ENSCAFP00000021562"/>
<dbReference type="Ensembl" id="ENSCAFT00000023220.5">
    <property type="protein sequence ID" value="ENSCAFP00000021562.5"/>
    <property type="gene ID" value="ENSCAFG00000014625.5"/>
</dbReference>
<dbReference type="Ensembl" id="ENSCAFT00030041790.1">
    <property type="protein sequence ID" value="ENSCAFP00030036455.1"/>
    <property type="gene ID" value="ENSCAFG00030022661.1"/>
</dbReference>
<dbReference type="Ensembl" id="ENSCAFT00845047061.1">
    <property type="protein sequence ID" value="ENSCAFP00845036933.1"/>
    <property type="gene ID" value="ENSCAFG00845026688.1"/>
</dbReference>
<dbReference type="GeneID" id="478908"/>
<dbReference type="KEGG" id="cfa:478908"/>
<dbReference type="CTD" id="14"/>
<dbReference type="VEuPathDB" id="HostDB:ENSCAFG00845026688"/>
<dbReference type="VGNC" id="VGNC:37412">
    <property type="gene designation" value="AAMP"/>
</dbReference>
<dbReference type="eggNOG" id="KOG0296">
    <property type="taxonomic scope" value="Eukaryota"/>
</dbReference>
<dbReference type="GeneTree" id="ENSGT00940000153648"/>
<dbReference type="HOGENOM" id="CLU_000288_57_9_1"/>
<dbReference type="InParanoid" id="Q7YR70"/>
<dbReference type="OMA" id="GPDEVMW"/>
<dbReference type="OrthoDB" id="10261640at2759"/>
<dbReference type="TreeFam" id="TF314543"/>
<dbReference type="Reactome" id="R-CFA-168638">
    <property type="pathway name" value="NOD1/2 Signaling Pathway"/>
</dbReference>
<dbReference type="Reactome" id="R-CFA-177929">
    <property type="pathway name" value="Signaling by EGFR"/>
</dbReference>
<dbReference type="Reactome" id="R-CFA-428930">
    <property type="pathway name" value="Thromboxane signalling through TP receptor"/>
</dbReference>
<dbReference type="Proteomes" id="UP000002254">
    <property type="component" value="Chromosome 37"/>
</dbReference>
<dbReference type="Proteomes" id="UP000694429">
    <property type="component" value="Chromosome 37"/>
</dbReference>
<dbReference type="Proteomes" id="UP000694542">
    <property type="component" value="Unplaced"/>
</dbReference>
<dbReference type="Proteomes" id="UP000805418">
    <property type="component" value="Chromosome 37"/>
</dbReference>
<dbReference type="GO" id="GO:0009986">
    <property type="term" value="C:cell surface"/>
    <property type="evidence" value="ECO:0000250"/>
    <property type="project" value="UniProtKB"/>
</dbReference>
<dbReference type="GO" id="GO:0005829">
    <property type="term" value="C:cytosol"/>
    <property type="evidence" value="ECO:0000318"/>
    <property type="project" value="GO_Central"/>
</dbReference>
<dbReference type="GO" id="GO:0045171">
    <property type="term" value="C:intercellular bridge"/>
    <property type="evidence" value="ECO:0007669"/>
    <property type="project" value="Ensembl"/>
</dbReference>
<dbReference type="GO" id="GO:0015630">
    <property type="term" value="C:microtubule cytoskeleton"/>
    <property type="evidence" value="ECO:0007669"/>
    <property type="project" value="Ensembl"/>
</dbReference>
<dbReference type="GO" id="GO:0005886">
    <property type="term" value="C:plasma membrane"/>
    <property type="evidence" value="ECO:0007669"/>
    <property type="project" value="UniProtKB-SubCell"/>
</dbReference>
<dbReference type="GO" id="GO:0008201">
    <property type="term" value="F:heparin binding"/>
    <property type="evidence" value="ECO:0007669"/>
    <property type="project" value="Ensembl"/>
</dbReference>
<dbReference type="GO" id="GO:0001525">
    <property type="term" value="P:angiogenesis"/>
    <property type="evidence" value="ECO:0007669"/>
    <property type="project" value="UniProtKB-KW"/>
</dbReference>
<dbReference type="GO" id="GO:0030154">
    <property type="term" value="P:cell differentiation"/>
    <property type="evidence" value="ECO:0007669"/>
    <property type="project" value="UniProtKB-KW"/>
</dbReference>
<dbReference type="GO" id="GO:0010595">
    <property type="term" value="P:positive regulation of endothelial cell migration"/>
    <property type="evidence" value="ECO:0000250"/>
    <property type="project" value="UniProtKB"/>
</dbReference>
<dbReference type="GO" id="GO:0014909">
    <property type="term" value="P:smooth muscle cell migration"/>
    <property type="evidence" value="ECO:0000250"/>
    <property type="project" value="UniProtKB"/>
</dbReference>
<dbReference type="CDD" id="cd00200">
    <property type="entry name" value="WD40"/>
    <property type="match status" value="1"/>
</dbReference>
<dbReference type="FunFam" id="2.130.10.10:FF:000074">
    <property type="entry name" value="Angio-associated migratory cell protein-like protein"/>
    <property type="match status" value="1"/>
</dbReference>
<dbReference type="Gene3D" id="2.130.10.10">
    <property type="entry name" value="YVTN repeat-like/Quinoprotein amine dehydrogenase"/>
    <property type="match status" value="1"/>
</dbReference>
<dbReference type="InterPro" id="IPR015943">
    <property type="entry name" value="WD40/YVTN_repeat-like_dom_sf"/>
</dbReference>
<dbReference type="InterPro" id="IPR019775">
    <property type="entry name" value="WD40_repeat_CS"/>
</dbReference>
<dbReference type="InterPro" id="IPR036322">
    <property type="entry name" value="WD40_repeat_dom_sf"/>
</dbReference>
<dbReference type="InterPro" id="IPR001680">
    <property type="entry name" value="WD40_rpt"/>
</dbReference>
<dbReference type="InterPro" id="IPR051179">
    <property type="entry name" value="WD_repeat_multifunction"/>
</dbReference>
<dbReference type="PANTHER" id="PTHR19857:SF8">
    <property type="entry name" value="ANGIO-ASSOCIATED MIGRATORY CELL PROTEIN"/>
    <property type="match status" value="1"/>
</dbReference>
<dbReference type="PANTHER" id="PTHR19857">
    <property type="entry name" value="MITOCHONDRIAL DIVISION PROTEIN 1-RELATED"/>
    <property type="match status" value="1"/>
</dbReference>
<dbReference type="Pfam" id="PF00400">
    <property type="entry name" value="WD40"/>
    <property type="match status" value="6"/>
</dbReference>
<dbReference type="SMART" id="SM00320">
    <property type="entry name" value="WD40"/>
    <property type="match status" value="8"/>
</dbReference>
<dbReference type="SUPFAM" id="SSF50978">
    <property type="entry name" value="WD40 repeat-like"/>
    <property type="match status" value="1"/>
</dbReference>
<dbReference type="PROSITE" id="PS00678">
    <property type="entry name" value="WD_REPEATS_1"/>
    <property type="match status" value="1"/>
</dbReference>
<dbReference type="PROSITE" id="PS50082">
    <property type="entry name" value="WD_REPEATS_2"/>
    <property type="match status" value="5"/>
</dbReference>
<dbReference type="PROSITE" id="PS50294">
    <property type="entry name" value="WD_REPEATS_REGION"/>
    <property type="match status" value="1"/>
</dbReference>
<protein>
    <recommendedName>
        <fullName>Angio-associated migratory cell protein</fullName>
    </recommendedName>
</protein>
<comment type="function">
    <text evidence="1">Plays a role in angiogenesis and cell migration. In smooth muscle cell migration, may act through the RhoA pathway (By similarity).</text>
</comment>
<comment type="subcellular location">
    <subcellularLocation>
        <location evidence="1">Cell membrane</location>
    </subcellularLocation>
    <subcellularLocation>
        <location evidence="1">Cytoplasm</location>
    </subcellularLocation>
</comment>
<gene>
    <name type="primary">AAMP</name>
</gene>
<sequence length="435" mass="46939">MESESESGAAADTPPLETLSFHGDEEIIEVVELDPGPPDPDDLAQEMEDVDFEEEEEEEEGNEEGWVLEPQEGVVGSMEGPDDSEVTFALHSASVFCVSLDPKTNTLAVTGGEDDKAFVWRLSDGELLFECAGHKDSVTCAGFSHDSTLVATGDMSGLLKVWQVDTKEEVWSFEAGDLEWMEWHPRAPVLLAGTADGNTWMWKVPNGDCKTFQGPNCPATCGRVLPDGKRAVVGYEDGTIRIWDLKQGSPIHVLKGTEGHQGPLTCVATNQDGSLILTGSVDCQAQLVSATTGKVVGVFRPETVASQPNVGEGEESESNSVESLGFCSVMPLAAVGYLDGTLAIYDLSTQTLRHQCQHQSGIVQLLWEAGTAVVYTCSLDGIVRLWDARTGRLLTDYRGHTAEILDFALSKDASLVVTTSGDHKAKVFCVQRPDR</sequence>